<organism>
    <name type="scientific">Caulobacter vibrioides (strain ATCC 19089 / CIP 103742 / CB 15)</name>
    <name type="common">Caulobacter crescentus</name>
    <dbReference type="NCBI Taxonomy" id="190650"/>
    <lineage>
        <taxon>Bacteria</taxon>
        <taxon>Pseudomonadati</taxon>
        <taxon>Pseudomonadota</taxon>
        <taxon>Alphaproteobacteria</taxon>
        <taxon>Caulobacterales</taxon>
        <taxon>Caulobacteraceae</taxon>
        <taxon>Caulobacter</taxon>
    </lineage>
</organism>
<name>NADA_CAUVC</name>
<dbReference type="EC" id="2.5.1.72" evidence="1"/>
<dbReference type="EMBL" id="AE005673">
    <property type="protein sequence ID" value="AAK24874.1"/>
    <property type="status" value="ALT_INIT"/>
    <property type="molecule type" value="Genomic_DNA"/>
</dbReference>
<dbReference type="PIR" id="F87609">
    <property type="entry name" value="F87609"/>
</dbReference>
<dbReference type="RefSeq" id="NP_421706.1">
    <property type="nucleotide sequence ID" value="NC_002696.2"/>
</dbReference>
<dbReference type="RefSeq" id="WP_024265876.1">
    <property type="nucleotide sequence ID" value="NC_002696.2"/>
</dbReference>
<dbReference type="SMR" id="Q9A4C4"/>
<dbReference type="STRING" id="190650.CC_2912"/>
<dbReference type="EnsemblBacteria" id="AAK24874">
    <property type="protein sequence ID" value="AAK24874"/>
    <property type="gene ID" value="CC_2912"/>
</dbReference>
<dbReference type="KEGG" id="ccr:CC_2912"/>
<dbReference type="PATRIC" id="fig|190650.5.peg.2917"/>
<dbReference type="eggNOG" id="COG0379">
    <property type="taxonomic scope" value="Bacteria"/>
</dbReference>
<dbReference type="HOGENOM" id="CLU_047382_0_0_5"/>
<dbReference type="BioCyc" id="CAULO:CC2912-MONOMER"/>
<dbReference type="UniPathway" id="UPA00253">
    <property type="reaction ID" value="UER00327"/>
</dbReference>
<dbReference type="Proteomes" id="UP000001816">
    <property type="component" value="Chromosome"/>
</dbReference>
<dbReference type="GO" id="GO:0005829">
    <property type="term" value="C:cytosol"/>
    <property type="evidence" value="ECO:0007669"/>
    <property type="project" value="TreeGrafter"/>
</dbReference>
<dbReference type="GO" id="GO:0051539">
    <property type="term" value="F:4 iron, 4 sulfur cluster binding"/>
    <property type="evidence" value="ECO:0007669"/>
    <property type="project" value="UniProtKB-KW"/>
</dbReference>
<dbReference type="GO" id="GO:0046872">
    <property type="term" value="F:metal ion binding"/>
    <property type="evidence" value="ECO:0007669"/>
    <property type="project" value="UniProtKB-KW"/>
</dbReference>
<dbReference type="GO" id="GO:0008987">
    <property type="term" value="F:quinolinate synthetase A activity"/>
    <property type="evidence" value="ECO:0007669"/>
    <property type="project" value="UniProtKB-UniRule"/>
</dbReference>
<dbReference type="GO" id="GO:0034628">
    <property type="term" value="P:'de novo' NAD biosynthetic process from L-aspartate"/>
    <property type="evidence" value="ECO:0007669"/>
    <property type="project" value="TreeGrafter"/>
</dbReference>
<dbReference type="Gene3D" id="3.40.50.10800">
    <property type="entry name" value="NadA-like"/>
    <property type="match status" value="3"/>
</dbReference>
<dbReference type="HAMAP" id="MF_00568">
    <property type="entry name" value="NadA_type2"/>
    <property type="match status" value="1"/>
</dbReference>
<dbReference type="InterPro" id="IPR003473">
    <property type="entry name" value="NadA"/>
</dbReference>
<dbReference type="InterPro" id="IPR036094">
    <property type="entry name" value="NadA_sf"/>
</dbReference>
<dbReference type="InterPro" id="IPR023066">
    <property type="entry name" value="Quinolinate_synth_type2"/>
</dbReference>
<dbReference type="NCBIfam" id="TIGR00550">
    <property type="entry name" value="nadA"/>
    <property type="match status" value="1"/>
</dbReference>
<dbReference type="NCBIfam" id="NF006878">
    <property type="entry name" value="PRK09375.1-2"/>
    <property type="match status" value="1"/>
</dbReference>
<dbReference type="NCBIfam" id="NF006879">
    <property type="entry name" value="PRK09375.1-4"/>
    <property type="match status" value="1"/>
</dbReference>
<dbReference type="PANTHER" id="PTHR30573:SF0">
    <property type="entry name" value="QUINOLINATE SYNTHASE, CHLOROPLASTIC"/>
    <property type="match status" value="1"/>
</dbReference>
<dbReference type="PANTHER" id="PTHR30573">
    <property type="entry name" value="QUINOLINATE SYNTHETASE A"/>
    <property type="match status" value="1"/>
</dbReference>
<dbReference type="Pfam" id="PF02445">
    <property type="entry name" value="NadA"/>
    <property type="match status" value="1"/>
</dbReference>
<dbReference type="SUPFAM" id="SSF142754">
    <property type="entry name" value="NadA-like"/>
    <property type="match status" value="1"/>
</dbReference>
<reference key="1">
    <citation type="journal article" date="2001" name="Proc. Natl. Acad. Sci. U.S.A.">
        <title>Complete genome sequence of Caulobacter crescentus.</title>
        <authorList>
            <person name="Nierman W.C."/>
            <person name="Feldblyum T.V."/>
            <person name="Laub M.T."/>
            <person name="Paulsen I.T."/>
            <person name="Nelson K.E."/>
            <person name="Eisen J.A."/>
            <person name="Heidelberg J.F."/>
            <person name="Alley M.R.K."/>
            <person name="Ohta N."/>
            <person name="Maddock J.R."/>
            <person name="Potocka I."/>
            <person name="Nelson W.C."/>
            <person name="Newton A."/>
            <person name="Stephens C."/>
            <person name="Phadke N.D."/>
            <person name="Ely B."/>
            <person name="DeBoy R.T."/>
            <person name="Dodson R.J."/>
            <person name="Durkin A.S."/>
            <person name="Gwinn M.L."/>
            <person name="Haft D.H."/>
            <person name="Kolonay J.F."/>
            <person name="Smit J."/>
            <person name="Craven M.B."/>
            <person name="Khouri H.M."/>
            <person name="Shetty J."/>
            <person name="Berry K.J."/>
            <person name="Utterback T.R."/>
            <person name="Tran K."/>
            <person name="Wolf A.M."/>
            <person name="Vamathevan J.J."/>
            <person name="Ermolaeva M.D."/>
            <person name="White O."/>
            <person name="Salzberg S.L."/>
            <person name="Venter J.C."/>
            <person name="Shapiro L."/>
            <person name="Fraser C.M."/>
        </authorList>
    </citation>
    <scope>NUCLEOTIDE SEQUENCE [LARGE SCALE GENOMIC DNA]</scope>
    <source>
        <strain>ATCC 19089 / CIP 103742 / CB 15</strain>
    </source>
</reference>
<sequence>MADGFATAPQDFKGVFTPEIEAQTAPVWEKVKHHVTPMEWRVQAPLIVEINRLKREKNAAILAHNYMTPDIFHGVGDFVGDSLALAKEAAKSDAQIIVQAGVHFMAETSKVLSPEKKILIPDLKAGCSLASSITGADVRLIKQRYPGVPVVTYVNTTADVKAETDICCTSANAVQVVEWAAKEWGTDKVILIPDEFLARNVARQTDVKIIAWAGHCEVHKRFTAQDIADMRAAWPGAEVLAHPECPAEILEAADFAGSTAAMNDYVAAKKPAQVVLITECSMASNVQAESPATQFIGPCNMCPHMKRITLQNIYDALVHEQYEVTVDAEVLDRARLAVQRMIDLPPPAVPARYDLVKARHHVDVELI</sequence>
<evidence type="ECO:0000255" key="1">
    <source>
        <dbReference type="HAMAP-Rule" id="MF_00568"/>
    </source>
</evidence>
<evidence type="ECO:0000305" key="2"/>
<gene>
    <name evidence="1" type="primary">nadA</name>
    <name type="ordered locus">CC_2912</name>
</gene>
<feature type="chain" id="PRO_0000155782" description="Quinolinate synthase">
    <location>
        <begin position="1"/>
        <end position="367"/>
    </location>
</feature>
<feature type="binding site" evidence="1">
    <location>
        <position position="64"/>
    </location>
    <ligand>
        <name>iminosuccinate</name>
        <dbReference type="ChEBI" id="CHEBI:77875"/>
    </ligand>
</feature>
<feature type="binding site" evidence="1">
    <location>
        <position position="82"/>
    </location>
    <ligand>
        <name>iminosuccinate</name>
        <dbReference type="ChEBI" id="CHEBI:77875"/>
    </ligand>
</feature>
<feature type="binding site" evidence="1">
    <location>
        <position position="127"/>
    </location>
    <ligand>
        <name>[4Fe-4S] cluster</name>
        <dbReference type="ChEBI" id="CHEBI:49883"/>
    </ligand>
</feature>
<feature type="binding site" evidence="1">
    <location>
        <begin position="153"/>
        <end position="155"/>
    </location>
    <ligand>
        <name>iminosuccinate</name>
        <dbReference type="ChEBI" id="CHEBI:77875"/>
    </ligand>
</feature>
<feature type="binding site" evidence="1">
    <location>
        <position position="170"/>
    </location>
    <ligand>
        <name>iminosuccinate</name>
        <dbReference type="ChEBI" id="CHEBI:77875"/>
    </ligand>
</feature>
<feature type="binding site" evidence="1">
    <location>
        <position position="216"/>
    </location>
    <ligand>
        <name>[4Fe-4S] cluster</name>
        <dbReference type="ChEBI" id="CHEBI:49883"/>
    </ligand>
</feature>
<feature type="binding site" evidence="1">
    <location>
        <begin position="242"/>
        <end position="244"/>
    </location>
    <ligand>
        <name>iminosuccinate</name>
        <dbReference type="ChEBI" id="CHEBI:77875"/>
    </ligand>
</feature>
<feature type="binding site" evidence="1">
    <location>
        <position position="259"/>
    </location>
    <ligand>
        <name>iminosuccinate</name>
        <dbReference type="ChEBI" id="CHEBI:77875"/>
    </ligand>
</feature>
<feature type="binding site" evidence="1">
    <location>
        <position position="302"/>
    </location>
    <ligand>
        <name>[4Fe-4S] cluster</name>
        <dbReference type="ChEBI" id="CHEBI:49883"/>
    </ligand>
</feature>
<keyword id="KW-0004">4Fe-4S</keyword>
<keyword id="KW-0963">Cytoplasm</keyword>
<keyword id="KW-0408">Iron</keyword>
<keyword id="KW-0411">Iron-sulfur</keyword>
<keyword id="KW-0479">Metal-binding</keyword>
<keyword id="KW-0662">Pyridine nucleotide biosynthesis</keyword>
<keyword id="KW-1185">Reference proteome</keyword>
<keyword id="KW-0808">Transferase</keyword>
<protein>
    <recommendedName>
        <fullName evidence="1">Quinolinate synthase</fullName>
        <ecNumber evidence="1">2.5.1.72</ecNumber>
    </recommendedName>
</protein>
<comment type="function">
    <text evidence="1">Catalyzes the condensation of iminoaspartate with dihydroxyacetone phosphate to form quinolinate.</text>
</comment>
<comment type="catalytic activity">
    <reaction evidence="1">
        <text>iminosuccinate + dihydroxyacetone phosphate = quinolinate + phosphate + 2 H2O + H(+)</text>
        <dbReference type="Rhea" id="RHEA:25888"/>
        <dbReference type="ChEBI" id="CHEBI:15377"/>
        <dbReference type="ChEBI" id="CHEBI:15378"/>
        <dbReference type="ChEBI" id="CHEBI:29959"/>
        <dbReference type="ChEBI" id="CHEBI:43474"/>
        <dbReference type="ChEBI" id="CHEBI:57642"/>
        <dbReference type="ChEBI" id="CHEBI:77875"/>
        <dbReference type="EC" id="2.5.1.72"/>
    </reaction>
    <physiologicalReaction direction="left-to-right" evidence="1">
        <dbReference type="Rhea" id="RHEA:25889"/>
    </physiologicalReaction>
</comment>
<comment type="cofactor">
    <cofactor evidence="1">
        <name>[4Fe-4S] cluster</name>
        <dbReference type="ChEBI" id="CHEBI:49883"/>
    </cofactor>
    <text evidence="1">Binds 1 [4Fe-4S] cluster per subunit.</text>
</comment>
<comment type="pathway">
    <text evidence="1">Cofactor biosynthesis; NAD(+) biosynthesis; quinolinate from iminoaspartate: step 1/1.</text>
</comment>
<comment type="subcellular location">
    <subcellularLocation>
        <location evidence="1">Cytoplasm</location>
    </subcellularLocation>
</comment>
<comment type="similarity">
    <text evidence="1">Belongs to the quinolinate synthase family. Type 2 subfamily.</text>
</comment>
<comment type="sequence caution" evidence="2">
    <conflict type="erroneous initiation">
        <sequence resource="EMBL-CDS" id="AAK24874"/>
    </conflict>
    <text>Extended N-terminus.</text>
</comment>
<accession>Q9A4C4</accession>
<proteinExistence type="inferred from homology"/>